<protein>
    <recommendedName>
        <fullName evidence="1">Dihydroorotase</fullName>
        <shortName evidence="1">DHOase</shortName>
        <ecNumber evidence="1">3.5.2.3</ecNumber>
    </recommendedName>
</protein>
<organism>
    <name type="scientific">Geobacter sp. (strain M21)</name>
    <dbReference type="NCBI Taxonomy" id="443144"/>
    <lineage>
        <taxon>Bacteria</taxon>
        <taxon>Pseudomonadati</taxon>
        <taxon>Thermodesulfobacteriota</taxon>
        <taxon>Desulfuromonadia</taxon>
        <taxon>Geobacterales</taxon>
        <taxon>Geobacteraceae</taxon>
        <taxon>Geobacter</taxon>
    </lineage>
</organism>
<accession>C6DZ51</accession>
<sequence length="425" mass="44478">MNLLIKGGRVIDPSQGIDANLDVLIADGVVLELGQGLAAPEGTPAIDAGGLIVTPGLIDMHVHLRDPGLEYKEDIATGSRSAAAGGFTSVACMPNTSPVIDSKAIASYIINKAKSEALVNVFPIGCITKGGKGESLAEMGELKEAGCVGVSDDGKPVCNSELMRRALEYAKGIGITVISHSEDLALVGEGVMNEGFVSTELGLKGIPWAAEDIAVAREVYLAEFAGAPVHIAHISTVGSARIVRNAKARGVKVTCETAPHYFTLTDEAVRGYDTNAKMNPPLRSAADIEAMKAGLADGTIDAIATDHAPHHPDEKDVEFNVALNGIVGLETSLPLSLKLVEEGRLDLNQLVSLMSCNPAKILGLDRGTLKVGAVGDVTVIDPAKEWQVEAAKLESKSKNSPFLGWKMKGRAVYTVVKGQVVYQAG</sequence>
<name>PYRC_GEOSM</name>
<dbReference type="EC" id="3.5.2.3" evidence="1"/>
<dbReference type="EMBL" id="CP001661">
    <property type="protein sequence ID" value="ACT18359.1"/>
    <property type="molecule type" value="Genomic_DNA"/>
</dbReference>
<dbReference type="SMR" id="C6DZ51"/>
<dbReference type="STRING" id="443144.GM21_2311"/>
<dbReference type="KEGG" id="gem:GM21_2311"/>
<dbReference type="eggNOG" id="COG0044">
    <property type="taxonomic scope" value="Bacteria"/>
</dbReference>
<dbReference type="HOGENOM" id="CLU_015572_1_0_7"/>
<dbReference type="OrthoDB" id="9803027at2"/>
<dbReference type="UniPathway" id="UPA00070">
    <property type="reaction ID" value="UER00117"/>
</dbReference>
<dbReference type="GO" id="GO:0005737">
    <property type="term" value="C:cytoplasm"/>
    <property type="evidence" value="ECO:0007669"/>
    <property type="project" value="TreeGrafter"/>
</dbReference>
<dbReference type="GO" id="GO:0004038">
    <property type="term" value="F:allantoinase activity"/>
    <property type="evidence" value="ECO:0007669"/>
    <property type="project" value="TreeGrafter"/>
</dbReference>
<dbReference type="GO" id="GO:0004151">
    <property type="term" value="F:dihydroorotase activity"/>
    <property type="evidence" value="ECO:0007669"/>
    <property type="project" value="UniProtKB-UniRule"/>
</dbReference>
<dbReference type="GO" id="GO:0008270">
    <property type="term" value="F:zinc ion binding"/>
    <property type="evidence" value="ECO:0007669"/>
    <property type="project" value="UniProtKB-UniRule"/>
</dbReference>
<dbReference type="GO" id="GO:0044205">
    <property type="term" value="P:'de novo' UMP biosynthetic process"/>
    <property type="evidence" value="ECO:0007669"/>
    <property type="project" value="UniProtKB-UniRule"/>
</dbReference>
<dbReference type="GO" id="GO:0006145">
    <property type="term" value="P:purine nucleobase catabolic process"/>
    <property type="evidence" value="ECO:0007669"/>
    <property type="project" value="TreeGrafter"/>
</dbReference>
<dbReference type="CDD" id="cd01317">
    <property type="entry name" value="DHOase_IIa"/>
    <property type="match status" value="1"/>
</dbReference>
<dbReference type="Gene3D" id="3.20.20.140">
    <property type="entry name" value="Metal-dependent hydrolases"/>
    <property type="match status" value="1"/>
</dbReference>
<dbReference type="Gene3D" id="2.30.40.10">
    <property type="entry name" value="Urease, subunit C, domain 1"/>
    <property type="match status" value="1"/>
</dbReference>
<dbReference type="HAMAP" id="MF_00220_B">
    <property type="entry name" value="PyrC_classI_B"/>
    <property type="match status" value="1"/>
</dbReference>
<dbReference type="InterPro" id="IPR006680">
    <property type="entry name" value="Amidohydro-rel"/>
</dbReference>
<dbReference type="InterPro" id="IPR004722">
    <property type="entry name" value="DHOase"/>
</dbReference>
<dbReference type="InterPro" id="IPR050138">
    <property type="entry name" value="DHOase/Allantoinase_Hydrolase"/>
</dbReference>
<dbReference type="InterPro" id="IPR002195">
    <property type="entry name" value="Dihydroorotase_CS"/>
</dbReference>
<dbReference type="InterPro" id="IPR011059">
    <property type="entry name" value="Metal-dep_hydrolase_composite"/>
</dbReference>
<dbReference type="InterPro" id="IPR032466">
    <property type="entry name" value="Metal_Hydrolase"/>
</dbReference>
<dbReference type="NCBIfam" id="TIGR00857">
    <property type="entry name" value="pyrC_multi"/>
    <property type="match status" value="1"/>
</dbReference>
<dbReference type="PANTHER" id="PTHR43668">
    <property type="entry name" value="ALLANTOINASE"/>
    <property type="match status" value="1"/>
</dbReference>
<dbReference type="PANTHER" id="PTHR43668:SF2">
    <property type="entry name" value="ALLANTOINASE"/>
    <property type="match status" value="1"/>
</dbReference>
<dbReference type="Pfam" id="PF01979">
    <property type="entry name" value="Amidohydro_1"/>
    <property type="match status" value="1"/>
</dbReference>
<dbReference type="SUPFAM" id="SSF51338">
    <property type="entry name" value="Composite domain of metallo-dependent hydrolases"/>
    <property type="match status" value="1"/>
</dbReference>
<dbReference type="SUPFAM" id="SSF51556">
    <property type="entry name" value="Metallo-dependent hydrolases"/>
    <property type="match status" value="1"/>
</dbReference>
<dbReference type="PROSITE" id="PS00482">
    <property type="entry name" value="DIHYDROOROTASE_1"/>
    <property type="match status" value="1"/>
</dbReference>
<dbReference type="PROSITE" id="PS00483">
    <property type="entry name" value="DIHYDROOROTASE_2"/>
    <property type="match status" value="1"/>
</dbReference>
<gene>
    <name evidence="1" type="primary">pyrC</name>
    <name type="ordered locus">GM21_2311</name>
</gene>
<reference key="1">
    <citation type="submission" date="2009-07" db="EMBL/GenBank/DDBJ databases">
        <title>Complete sequence of Geobacter sp. M21.</title>
        <authorList>
            <consortium name="US DOE Joint Genome Institute"/>
            <person name="Lucas S."/>
            <person name="Copeland A."/>
            <person name="Lapidus A."/>
            <person name="Glavina del Rio T."/>
            <person name="Dalin E."/>
            <person name="Tice H."/>
            <person name="Bruce D."/>
            <person name="Goodwin L."/>
            <person name="Pitluck S."/>
            <person name="Saunders E."/>
            <person name="Brettin T."/>
            <person name="Detter J.C."/>
            <person name="Han C."/>
            <person name="Larimer F."/>
            <person name="Land M."/>
            <person name="Hauser L."/>
            <person name="Kyrpides N."/>
            <person name="Ovchinnikova G."/>
            <person name="Lovley D."/>
        </authorList>
    </citation>
    <scope>NUCLEOTIDE SEQUENCE [LARGE SCALE GENOMIC DNA]</scope>
    <source>
        <strain>M21</strain>
    </source>
</reference>
<evidence type="ECO:0000255" key="1">
    <source>
        <dbReference type="HAMAP-Rule" id="MF_00220"/>
    </source>
</evidence>
<comment type="function">
    <text evidence="1">Catalyzes the reversible cyclization of carbamoyl aspartate to dihydroorotate.</text>
</comment>
<comment type="catalytic activity">
    <reaction evidence="1">
        <text>(S)-dihydroorotate + H2O = N-carbamoyl-L-aspartate + H(+)</text>
        <dbReference type="Rhea" id="RHEA:24296"/>
        <dbReference type="ChEBI" id="CHEBI:15377"/>
        <dbReference type="ChEBI" id="CHEBI:15378"/>
        <dbReference type="ChEBI" id="CHEBI:30864"/>
        <dbReference type="ChEBI" id="CHEBI:32814"/>
        <dbReference type="EC" id="3.5.2.3"/>
    </reaction>
</comment>
<comment type="cofactor">
    <cofactor evidence="1">
        <name>Zn(2+)</name>
        <dbReference type="ChEBI" id="CHEBI:29105"/>
    </cofactor>
    <text evidence="1">Binds 2 Zn(2+) ions per subunit.</text>
</comment>
<comment type="pathway">
    <text evidence="1">Pyrimidine metabolism; UMP biosynthesis via de novo pathway; (S)-dihydroorotate from bicarbonate: step 3/3.</text>
</comment>
<comment type="similarity">
    <text evidence="1">Belongs to the metallo-dependent hydrolases superfamily. DHOase family. Class I DHOase subfamily.</text>
</comment>
<proteinExistence type="inferred from homology"/>
<feature type="chain" id="PRO_1000204252" description="Dihydroorotase">
    <location>
        <begin position="1"/>
        <end position="425"/>
    </location>
</feature>
<feature type="active site" evidence="1">
    <location>
        <position position="306"/>
    </location>
</feature>
<feature type="binding site" evidence="1">
    <location>
        <position position="61"/>
    </location>
    <ligand>
        <name>Zn(2+)</name>
        <dbReference type="ChEBI" id="CHEBI:29105"/>
        <label>1</label>
    </ligand>
</feature>
<feature type="binding site" evidence="1">
    <location>
        <begin position="63"/>
        <end position="65"/>
    </location>
    <ligand>
        <name>substrate</name>
    </ligand>
</feature>
<feature type="binding site" evidence="1">
    <location>
        <position position="63"/>
    </location>
    <ligand>
        <name>Zn(2+)</name>
        <dbReference type="ChEBI" id="CHEBI:29105"/>
        <label>1</label>
    </ligand>
</feature>
<feature type="binding site" evidence="1">
    <location>
        <position position="95"/>
    </location>
    <ligand>
        <name>substrate</name>
    </ligand>
</feature>
<feature type="binding site" evidence="1">
    <location>
        <position position="153"/>
    </location>
    <ligand>
        <name>Zn(2+)</name>
        <dbReference type="ChEBI" id="CHEBI:29105"/>
        <label>1</label>
    </ligand>
</feature>
<feature type="binding site" evidence="1">
    <location>
        <position position="153"/>
    </location>
    <ligand>
        <name>Zn(2+)</name>
        <dbReference type="ChEBI" id="CHEBI:29105"/>
        <label>2</label>
    </ligand>
</feature>
<feature type="binding site" evidence="1">
    <location>
        <position position="180"/>
    </location>
    <ligand>
        <name>Zn(2+)</name>
        <dbReference type="ChEBI" id="CHEBI:29105"/>
        <label>2</label>
    </ligand>
</feature>
<feature type="binding site" evidence="1">
    <location>
        <position position="233"/>
    </location>
    <ligand>
        <name>Zn(2+)</name>
        <dbReference type="ChEBI" id="CHEBI:29105"/>
        <label>2</label>
    </ligand>
</feature>
<feature type="binding site" evidence="1">
    <location>
        <position position="279"/>
    </location>
    <ligand>
        <name>substrate</name>
    </ligand>
</feature>
<feature type="binding site" evidence="1">
    <location>
        <position position="306"/>
    </location>
    <ligand>
        <name>Zn(2+)</name>
        <dbReference type="ChEBI" id="CHEBI:29105"/>
        <label>1</label>
    </ligand>
</feature>
<feature type="binding site" evidence="1">
    <location>
        <position position="310"/>
    </location>
    <ligand>
        <name>substrate</name>
    </ligand>
</feature>
<keyword id="KW-0378">Hydrolase</keyword>
<keyword id="KW-0479">Metal-binding</keyword>
<keyword id="KW-0665">Pyrimidine biosynthesis</keyword>
<keyword id="KW-0862">Zinc</keyword>